<protein>
    <recommendedName>
        <fullName evidence="1">Pantothenate synthetase</fullName>
        <shortName evidence="1">PS</shortName>
        <ecNumber evidence="1">6.3.2.1</ecNumber>
    </recommendedName>
    <alternativeName>
        <fullName evidence="1">Pantoate--beta-alanine ligase</fullName>
    </alternativeName>
    <alternativeName>
        <fullName evidence="1">Pantoate-activating enzyme</fullName>
    </alternativeName>
</protein>
<organism>
    <name type="scientific">Brucella abortus (strain S19)</name>
    <dbReference type="NCBI Taxonomy" id="430066"/>
    <lineage>
        <taxon>Bacteria</taxon>
        <taxon>Pseudomonadati</taxon>
        <taxon>Pseudomonadota</taxon>
        <taxon>Alphaproteobacteria</taxon>
        <taxon>Hyphomicrobiales</taxon>
        <taxon>Brucellaceae</taxon>
        <taxon>Brucella/Ochrobactrum group</taxon>
        <taxon>Brucella</taxon>
    </lineage>
</organism>
<evidence type="ECO:0000255" key="1">
    <source>
        <dbReference type="HAMAP-Rule" id="MF_00158"/>
    </source>
</evidence>
<accession>B2S9H8</accession>
<dbReference type="EC" id="6.3.2.1" evidence="1"/>
<dbReference type="EMBL" id="CP000887">
    <property type="protein sequence ID" value="ACD71869.1"/>
    <property type="molecule type" value="Genomic_DNA"/>
</dbReference>
<dbReference type="RefSeq" id="WP_002963494.1">
    <property type="nucleotide sequence ID" value="NC_010742.1"/>
</dbReference>
<dbReference type="SMR" id="B2S9H8"/>
<dbReference type="GeneID" id="93017206"/>
<dbReference type="KEGG" id="bmc:BAbS19_I03280"/>
<dbReference type="HOGENOM" id="CLU_047148_0_0_5"/>
<dbReference type="UniPathway" id="UPA00028">
    <property type="reaction ID" value="UER00005"/>
</dbReference>
<dbReference type="Proteomes" id="UP000002565">
    <property type="component" value="Chromosome 1"/>
</dbReference>
<dbReference type="GO" id="GO:0005829">
    <property type="term" value="C:cytosol"/>
    <property type="evidence" value="ECO:0007669"/>
    <property type="project" value="TreeGrafter"/>
</dbReference>
<dbReference type="GO" id="GO:0005524">
    <property type="term" value="F:ATP binding"/>
    <property type="evidence" value="ECO:0007669"/>
    <property type="project" value="UniProtKB-KW"/>
</dbReference>
<dbReference type="GO" id="GO:0004592">
    <property type="term" value="F:pantoate-beta-alanine ligase activity"/>
    <property type="evidence" value="ECO:0007669"/>
    <property type="project" value="UniProtKB-UniRule"/>
</dbReference>
<dbReference type="GO" id="GO:0015940">
    <property type="term" value="P:pantothenate biosynthetic process"/>
    <property type="evidence" value="ECO:0007669"/>
    <property type="project" value="UniProtKB-UniRule"/>
</dbReference>
<dbReference type="CDD" id="cd00560">
    <property type="entry name" value="PanC"/>
    <property type="match status" value="1"/>
</dbReference>
<dbReference type="FunFam" id="3.40.50.620:FF:000013">
    <property type="entry name" value="Pantothenate synthetase"/>
    <property type="match status" value="1"/>
</dbReference>
<dbReference type="Gene3D" id="3.40.50.620">
    <property type="entry name" value="HUPs"/>
    <property type="match status" value="1"/>
</dbReference>
<dbReference type="Gene3D" id="3.30.1300.10">
    <property type="entry name" value="Pantoate-beta-alanine ligase, C-terminal domain"/>
    <property type="match status" value="1"/>
</dbReference>
<dbReference type="HAMAP" id="MF_00158">
    <property type="entry name" value="PanC"/>
    <property type="match status" value="1"/>
</dbReference>
<dbReference type="InterPro" id="IPR004821">
    <property type="entry name" value="Cyt_trans-like"/>
</dbReference>
<dbReference type="InterPro" id="IPR003721">
    <property type="entry name" value="Pantoate_ligase"/>
</dbReference>
<dbReference type="InterPro" id="IPR042176">
    <property type="entry name" value="Pantoate_ligase_C"/>
</dbReference>
<dbReference type="InterPro" id="IPR014729">
    <property type="entry name" value="Rossmann-like_a/b/a_fold"/>
</dbReference>
<dbReference type="NCBIfam" id="TIGR00125">
    <property type="entry name" value="cyt_tran_rel"/>
    <property type="match status" value="1"/>
</dbReference>
<dbReference type="NCBIfam" id="TIGR00018">
    <property type="entry name" value="panC"/>
    <property type="match status" value="1"/>
</dbReference>
<dbReference type="PANTHER" id="PTHR21299">
    <property type="entry name" value="CYTIDYLATE KINASE/PANTOATE-BETA-ALANINE LIGASE"/>
    <property type="match status" value="1"/>
</dbReference>
<dbReference type="PANTHER" id="PTHR21299:SF1">
    <property type="entry name" value="PANTOATE--BETA-ALANINE LIGASE"/>
    <property type="match status" value="1"/>
</dbReference>
<dbReference type="Pfam" id="PF02569">
    <property type="entry name" value="Pantoate_ligase"/>
    <property type="match status" value="1"/>
</dbReference>
<dbReference type="SUPFAM" id="SSF52374">
    <property type="entry name" value="Nucleotidylyl transferase"/>
    <property type="match status" value="1"/>
</dbReference>
<gene>
    <name evidence="1" type="primary">panC</name>
    <name type="ordered locus">BAbS19_I03280</name>
</gene>
<keyword id="KW-0067">ATP-binding</keyword>
<keyword id="KW-0963">Cytoplasm</keyword>
<keyword id="KW-0436">Ligase</keyword>
<keyword id="KW-0547">Nucleotide-binding</keyword>
<keyword id="KW-0566">Pantothenate biosynthesis</keyword>
<proteinExistence type="inferred from homology"/>
<name>PANC_BRUA1</name>
<comment type="function">
    <text evidence="1">Catalyzes the condensation of pantoate with beta-alanine in an ATP-dependent reaction via a pantoyl-adenylate intermediate.</text>
</comment>
<comment type="catalytic activity">
    <reaction evidence="1">
        <text>(R)-pantoate + beta-alanine + ATP = (R)-pantothenate + AMP + diphosphate + H(+)</text>
        <dbReference type="Rhea" id="RHEA:10912"/>
        <dbReference type="ChEBI" id="CHEBI:15378"/>
        <dbReference type="ChEBI" id="CHEBI:15980"/>
        <dbReference type="ChEBI" id="CHEBI:29032"/>
        <dbReference type="ChEBI" id="CHEBI:30616"/>
        <dbReference type="ChEBI" id="CHEBI:33019"/>
        <dbReference type="ChEBI" id="CHEBI:57966"/>
        <dbReference type="ChEBI" id="CHEBI:456215"/>
        <dbReference type="EC" id="6.3.2.1"/>
    </reaction>
</comment>
<comment type="pathway">
    <text evidence="1">Cofactor biosynthesis; (R)-pantothenate biosynthesis; (R)-pantothenate from (R)-pantoate and beta-alanine: step 1/1.</text>
</comment>
<comment type="subunit">
    <text evidence="1">Homodimer.</text>
</comment>
<comment type="subcellular location">
    <subcellularLocation>
        <location evidence="1">Cytoplasm</location>
    </subcellularLocation>
</comment>
<comment type="miscellaneous">
    <text evidence="1">The reaction proceeds by a bi uni uni bi ping pong mechanism.</text>
</comment>
<comment type="similarity">
    <text evidence="1">Belongs to the pantothenate synthetase family.</text>
</comment>
<sequence length="293" mass="32506">MQIIHTIEELRQALAPARQQGKKIGFVPTMGYLHKGHLELVRRARVENDVTLVSIFVNPLQFGANEDLGRYPRDLERDAGLLHDAQVDYLFAPTVSDMYPRPMQTVVDVPPLGNQIEGEARPGHFAGVATVVSKLFNIVGPDAAYFGEKDFQQLVIIRRMVDDMAIPVRIVGVETVREDDGLACSSRNVYLTPEQRRAAIIVPQALDEADRLYRSGMDDPDALEAAIRTFIGRQPLAVPEVIAIRDPETLERLPALQGRPILVALFVRVGATRLLDNRVIGHAAPQITQERAA</sequence>
<feature type="chain" id="PRO_1000097032" description="Pantothenate synthetase">
    <location>
        <begin position="1"/>
        <end position="293"/>
    </location>
</feature>
<feature type="active site" description="Proton donor" evidence="1">
    <location>
        <position position="37"/>
    </location>
</feature>
<feature type="binding site" evidence="1">
    <location>
        <begin position="30"/>
        <end position="37"/>
    </location>
    <ligand>
        <name>ATP</name>
        <dbReference type="ChEBI" id="CHEBI:30616"/>
    </ligand>
</feature>
<feature type="binding site" evidence="1">
    <location>
        <position position="61"/>
    </location>
    <ligand>
        <name>(R)-pantoate</name>
        <dbReference type="ChEBI" id="CHEBI:15980"/>
    </ligand>
</feature>
<feature type="binding site" evidence="1">
    <location>
        <position position="61"/>
    </location>
    <ligand>
        <name>beta-alanine</name>
        <dbReference type="ChEBI" id="CHEBI:57966"/>
    </ligand>
</feature>
<feature type="binding site" evidence="1">
    <location>
        <begin position="147"/>
        <end position="150"/>
    </location>
    <ligand>
        <name>ATP</name>
        <dbReference type="ChEBI" id="CHEBI:30616"/>
    </ligand>
</feature>
<feature type="binding site" evidence="1">
    <location>
        <position position="153"/>
    </location>
    <ligand>
        <name>(R)-pantoate</name>
        <dbReference type="ChEBI" id="CHEBI:15980"/>
    </ligand>
</feature>
<feature type="binding site" evidence="1">
    <location>
        <position position="176"/>
    </location>
    <ligand>
        <name>ATP</name>
        <dbReference type="ChEBI" id="CHEBI:30616"/>
    </ligand>
</feature>
<feature type="binding site" evidence="1">
    <location>
        <begin position="184"/>
        <end position="187"/>
    </location>
    <ligand>
        <name>ATP</name>
        <dbReference type="ChEBI" id="CHEBI:30616"/>
    </ligand>
</feature>
<reference key="1">
    <citation type="journal article" date="2008" name="PLoS ONE">
        <title>Genome sequence of Brucella abortus vaccine strain S19 compared to virulent strains yields candidate virulence genes.</title>
        <authorList>
            <person name="Crasta O.R."/>
            <person name="Folkerts O."/>
            <person name="Fei Z."/>
            <person name="Mane S.P."/>
            <person name="Evans C."/>
            <person name="Martino-Catt S."/>
            <person name="Bricker B."/>
            <person name="Yu G."/>
            <person name="Du L."/>
            <person name="Sobral B.W."/>
        </authorList>
    </citation>
    <scope>NUCLEOTIDE SEQUENCE [LARGE SCALE GENOMIC DNA]</scope>
    <source>
        <strain>S19</strain>
    </source>
</reference>